<proteinExistence type="inferred from homology"/>
<accession>B4PDM5</accession>
<comment type="function">
    <text evidence="1">Serine/threonine-protein kinase that plays a central role in centriole duplication. Able to trigger procentriole formation on the surface of the mother centriole cylinder, using mother centriole as a platform, leading to the recruitment of centriole biogenesis proteins such as sas-6. When overexpressed, it is able to induce centrosome amplification through the simultaneous generation of multiple procentrioles adjoining each parental centriole during S phase. Centrosome amplification following overexpression can initiate tumorigenesis, highlighting the importance of centrosome regulation in cancers (By similarity).</text>
</comment>
<comment type="catalytic activity">
    <reaction>
        <text>L-seryl-[protein] + ATP = O-phospho-L-seryl-[protein] + ADP + H(+)</text>
        <dbReference type="Rhea" id="RHEA:17989"/>
        <dbReference type="Rhea" id="RHEA-COMP:9863"/>
        <dbReference type="Rhea" id="RHEA-COMP:11604"/>
        <dbReference type="ChEBI" id="CHEBI:15378"/>
        <dbReference type="ChEBI" id="CHEBI:29999"/>
        <dbReference type="ChEBI" id="CHEBI:30616"/>
        <dbReference type="ChEBI" id="CHEBI:83421"/>
        <dbReference type="ChEBI" id="CHEBI:456216"/>
        <dbReference type="EC" id="2.7.11.21"/>
    </reaction>
</comment>
<comment type="catalytic activity">
    <reaction>
        <text>L-threonyl-[protein] + ATP = O-phospho-L-threonyl-[protein] + ADP + H(+)</text>
        <dbReference type="Rhea" id="RHEA:46608"/>
        <dbReference type="Rhea" id="RHEA-COMP:11060"/>
        <dbReference type="Rhea" id="RHEA-COMP:11605"/>
        <dbReference type="ChEBI" id="CHEBI:15378"/>
        <dbReference type="ChEBI" id="CHEBI:30013"/>
        <dbReference type="ChEBI" id="CHEBI:30616"/>
        <dbReference type="ChEBI" id="CHEBI:61977"/>
        <dbReference type="ChEBI" id="CHEBI:456216"/>
        <dbReference type="EC" id="2.7.11.21"/>
    </reaction>
</comment>
<comment type="subunit">
    <text evidence="1">Homodimer.</text>
</comment>
<comment type="subcellular location">
    <subcellularLocation>
        <location evidence="1">Cytoplasm</location>
        <location evidence="1">Cytoskeleton</location>
        <location evidence="1">Microtubule organizing center</location>
        <location evidence="1">Centrosome</location>
        <location evidence="1">Centriole</location>
    </subcellularLocation>
</comment>
<comment type="PTM">
    <text evidence="1">Ubiquitinated by the SCF(Slimb) ubiquitin ligase complex; leading to its degradation by the proteasome during interphase and regulating centriole number and ensuring the block to centriole reduplication.</text>
</comment>
<comment type="similarity">
    <text evidence="3 4 5">Belongs to the protein kinase superfamily. Ser/Thr protein kinase family. CDC5/Polo subfamily.</text>
</comment>
<protein>
    <recommendedName>
        <fullName>Serine/threonine-protein kinase PLK4</fullName>
        <ecNumber>2.7.11.21</ecNumber>
    </recommendedName>
    <alternativeName>
        <fullName>Polo-like kinase 4</fullName>
        <shortName>PLK-4</shortName>
    </alternativeName>
    <alternativeName>
        <fullName>Serine/threonine-protein kinase SAK</fullName>
    </alternativeName>
</protein>
<sequence length="766" mass="85896">MLSNRAFGETIEDYEVQHLLGKGGFAIVYKARCLHTHQDVAIKMIDKKLIQGTGLTNRVRQEVEIHSRLKHPSVLQLYTFFQDANYVYLVLELAHNGELHRYMNHIARPFTETEAASILKQVVAGLLYLHSHNIMHRDISLSNLLLSKEMHVKIADFGLATQLKRPDERHMTMCGTPNYISPEVVSRSSHGLPADVWSVGCMLYTLLVGRPPFETDAVQSTLNKVVMSEYIMPAHLSYEAQDLINKLLKKLPHERITLEAVLCHPFMLKCSNGGHSTPGALNMFSQSMESADSGIITFASSESRNSQQIRSVENSGPQQMLPQIQEEFKHHKLTYEQPGLFRQTSTGLAEPNWPGAAKASAFHMEIGMVPTSKPAPVKEDRISVPPLNTKRLLSTRYKTKNAIMSILRNGEVVLEFLKFRPTYNEDRIIDICRISDDGQRIIIYQPDPGRGLPVREQPPDLQIPSGDCVYNYENLPSKHWKKYIYGARFVGLVKSKTPKVTYFSTLGKCQLMETMTDFEIRFYSGAKLLKTPTEGVKVYDRNGMFLSDHTCSESRSLIEHGNECFTHCININNALEVAQTKDNSCFPVTIGRRPVTDVQPAQRLDGLRDTTNIAFSTPKSNQGSINFSVSTISSTRNTTDFGNNCSRLNMLASHQNIPIKRINVPDVGIATELSHGVVQVQFYDGSVVSVIPSMQGGGITYTQPNGTSTHFGKDDDLPFPVRDRVGQIPNIQIKLKTAPLLESGRKIDYNNATPKTTTPSYNRMLL</sequence>
<gene>
    <name type="primary">SAK</name>
    <name type="ORF">GE22325</name>
</gene>
<evidence type="ECO:0000250" key="1"/>
<evidence type="ECO:0000255" key="2">
    <source>
        <dbReference type="PROSITE-ProRule" id="PRU00154"/>
    </source>
</evidence>
<evidence type="ECO:0000255" key="3">
    <source>
        <dbReference type="PROSITE-ProRule" id="PRU00159"/>
    </source>
</evidence>
<evidence type="ECO:0000255" key="4">
    <source>
        <dbReference type="PROSITE-ProRule" id="PRU01328"/>
    </source>
</evidence>
<evidence type="ECO:0000255" key="5">
    <source>
        <dbReference type="PROSITE-ProRule" id="PRU01329"/>
    </source>
</evidence>
<organism>
    <name type="scientific">Drosophila yakuba</name>
    <name type="common">Fruit fly</name>
    <dbReference type="NCBI Taxonomy" id="7245"/>
    <lineage>
        <taxon>Eukaryota</taxon>
        <taxon>Metazoa</taxon>
        <taxon>Ecdysozoa</taxon>
        <taxon>Arthropoda</taxon>
        <taxon>Hexapoda</taxon>
        <taxon>Insecta</taxon>
        <taxon>Pterygota</taxon>
        <taxon>Neoptera</taxon>
        <taxon>Endopterygota</taxon>
        <taxon>Diptera</taxon>
        <taxon>Brachycera</taxon>
        <taxon>Muscomorpha</taxon>
        <taxon>Ephydroidea</taxon>
        <taxon>Drosophilidae</taxon>
        <taxon>Drosophila</taxon>
        <taxon>Sophophora</taxon>
    </lineage>
</organism>
<name>PLK4_DROYA</name>
<keyword id="KW-0067">ATP-binding</keyword>
<keyword id="KW-0963">Cytoplasm</keyword>
<keyword id="KW-0206">Cytoskeleton</keyword>
<keyword id="KW-0418">Kinase</keyword>
<keyword id="KW-0547">Nucleotide-binding</keyword>
<keyword id="KW-0723">Serine/threonine-protein kinase</keyword>
<keyword id="KW-0808">Transferase</keyword>
<keyword id="KW-0832">Ubl conjugation</keyword>
<dbReference type="EC" id="2.7.11.21"/>
<dbReference type="EMBL" id="CM000159">
    <property type="protein sequence ID" value="EDW95024.1"/>
    <property type="molecule type" value="Genomic_DNA"/>
</dbReference>
<dbReference type="SMR" id="B4PDM5"/>
<dbReference type="EnsemblMetazoa" id="FBtr0268843">
    <property type="protein sequence ID" value="FBpp0267335"/>
    <property type="gene ID" value="FBgn0239548"/>
</dbReference>
<dbReference type="EnsemblMetazoa" id="XM_002095276.4">
    <property type="protein sequence ID" value="XP_002095312.1"/>
    <property type="gene ID" value="LOC6534637"/>
</dbReference>
<dbReference type="GeneID" id="6534637"/>
<dbReference type="KEGG" id="dya:Dyak_GE22325"/>
<dbReference type="eggNOG" id="KOG0575">
    <property type="taxonomic scope" value="Eukaryota"/>
</dbReference>
<dbReference type="HOGENOM" id="CLU_008726_2_0_1"/>
<dbReference type="OMA" id="LPSKHWK"/>
<dbReference type="OrthoDB" id="10004143at2759"/>
<dbReference type="PhylomeDB" id="B4PDM5"/>
<dbReference type="ChiTaRS" id="SAK">
    <property type="organism name" value="fly"/>
</dbReference>
<dbReference type="Proteomes" id="UP000002282">
    <property type="component" value="Chromosome 3L"/>
</dbReference>
<dbReference type="GO" id="GO:0005814">
    <property type="term" value="C:centriole"/>
    <property type="evidence" value="ECO:0007669"/>
    <property type="project" value="UniProtKB-SubCell"/>
</dbReference>
<dbReference type="GO" id="GO:0005737">
    <property type="term" value="C:cytoplasm"/>
    <property type="evidence" value="ECO:0007669"/>
    <property type="project" value="UniProtKB-KW"/>
</dbReference>
<dbReference type="GO" id="GO:0005634">
    <property type="term" value="C:nucleus"/>
    <property type="evidence" value="ECO:0007669"/>
    <property type="project" value="TreeGrafter"/>
</dbReference>
<dbReference type="GO" id="GO:0005524">
    <property type="term" value="F:ATP binding"/>
    <property type="evidence" value="ECO:0007669"/>
    <property type="project" value="UniProtKB-KW"/>
</dbReference>
<dbReference type="GO" id="GO:0042802">
    <property type="term" value="F:identical protein binding"/>
    <property type="evidence" value="ECO:0007669"/>
    <property type="project" value="EnsemblMetazoa"/>
</dbReference>
<dbReference type="GO" id="GO:0106310">
    <property type="term" value="F:protein serine kinase activity"/>
    <property type="evidence" value="ECO:0007669"/>
    <property type="project" value="RHEA"/>
</dbReference>
<dbReference type="GO" id="GO:0004674">
    <property type="term" value="F:protein serine/threonine kinase activity"/>
    <property type="evidence" value="ECO:0007669"/>
    <property type="project" value="UniProtKB-KW"/>
</dbReference>
<dbReference type="GO" id="GO:0007099">
    <property type="term" value="P:centriole replication"/>
    <property type="evidence" value="ECO:0007669"/>
    <property type="project" value="EnsemblMetazoa"/>
</dbReference>
<dbReference type="GO" id="GO:0007140">
    <property type="term" value="P:male meiotic nuclear division"/>
    <property type="evidence" value="ECO:0007669"/>
    <property type="project" value="EnsemblMetazoa"/>
</dbReference>
<dbReference type="GO" id="GO:0045732">
    <property type="term" value="P:positive regulation of protein catabolic process"/>
    <property type="evidence" value="ECO:0007669"/>
    <property type="project" value="EnsemblMetazoa"/>
</dbReference>
<dbReference type="GO" id="GO:0046599">
    <property type="term" value="P:regulation of centriole replication"/>
    <property type="evidence" value="ECO:0007669"/>
    <property type="project" value="EnsemblMetazoa"/>
</dbReference>
<dbReference type="GO" id="GO:0031647">
    <property type="term" value="P:regulation of protein stability"/>
    <property type="evidence" value="ECO:0007669"/>
    <property type="project" value="EnsemblMetazoa"/>
</dbReference>
<dbReference type="GO" id="GO:0007288">
    <property type="term" value="P:sperm axoneme assembly"/>
    <property type="evidence" value="ECO:0007669"/>
    <property type="project" value="EnsemblMetazoa"/>
</dbReference>
<dbReference type="GO" id="GO:0035186">
    <property type="term" value="P:syncytial blastoderm mitotic cell cycle"/>
    <property type="evidence" value="ECO:0007669"/>
    <property type="project" value="EnsemblMetazoa"/>
</dbReference>
<dbReference type="CDD" id="cd13114">
    <property type="entry name" value="POLO_box_Plk4_1"/>
    <property type="match status" value="1"/>
</dbReference>
<dbReference type="CDD" id="cd13115">
    <property type="entry name" value="POLO_box_Plk4_2"/>
    <property type="match status" value="1"/>
</dbReference>
<dbReference type="CDD" id="cd13116">
    <property type="entry name" value="POLO_box_Plk4_3"/>
    <property type="match status" value="1"/>
</dbReference>
<dbReference type="FunFam" id="3.30.200.20:FF:000042">
    <property type="entry name" value="Aurora kinase A"/>
    <property type="match status" value="1"/>
</dbReference>
<dbReference type="FunFam" id="1.10.510.10:FF:000576">
    <property type="entry name" value="Serine/threonine-protein kinase PLK4"/>
    <property type="match status" value="1"/>
</dbReference>
<dbReference type="FunFam" id="2.40.50.930:FF:000001">
    <property type="entry name" value="Serine/threonine-protein kinase PLK4"/>
    <property type="match status" value="1"/>
</dbReference>
<dbReference type="FunFam" id="3.30.1120.130:FF:000002">
    <property type="entry name" value="Serine/threonine-protein kinase PLK4"/>
    <property type="match status" value="1"/>
</dbReference>
<dbReference type="FunFam" id="3.30.1120.120:FF:000001">
    <property type="entry name" value="serine/threonine-protein kinase PLK4 isoform X2"/>
    <property type="match status" value="1"/>
</dbReference>
<dbReference type="Gene3D" id="2.40.50.930">
    <property type="match status" value="1"/>
</dbReference>
<dbReference type="Gene3D" id="3.30.1120.120">
    <property type="match status" value="1"/>
</dbReference>
<dbReference type="Gene3D" id="3.30.1120.130">
    <property type="match status" value="1"/>
</dbReference>
<dbReference type="Gene3D" id="1.10.510.10">
    <property type="entry name" value="Transferase(Phosphotransferase) domain 1"/>
    <property type="match status" value="1"/>
</dbReference>
<dbReference type="InterPro" id="IPR011009">
    <property type="entry name" value="Kinase-like_dom_sf"/>
</dbReference>
<dbReference type="InterPro" id="IPR047108">
    <property type="entry name" value="Plk4-like_POLO_box_2_sf"/>
</dbReference>
<dbReference type="InterPro" id="IPR000959">
    <property type="entry name" value="POLO_box_dom"/>
</dbReference>
<dbReference type="InterPro" id="IPR033699">
    <property type="entry name" value="POLO_box_Plk4_1"/>
</dbReference>
<dbReference type="InterPro" id="IPR033698">
    <property type="entry name" value="POLO_box_Plk4_2"/>
</dbReference>
<dbReference type="InterPro" id="IPR033696">
    <property type="entry name" value="POLO_box_Plk4_C"/>
</dbReference>
<dbReference type="InterPro" id="IPR000719">
    <property type="entry name" value="Prot_kinase_dom"/>
</dbReference>
<dbReference type="InterPro" id="IPR017441">
    <property type="entry name" value="Protein_kinase_ATP_BS"/>
</dbReference>
<dbReference type="InterPro" id="IPR046437">
    <property type="entry name" value="Ser_Thr-PK_POLO_box_1_sf"/>
</dbReference>
<dbReference type="InterPro" id="IPR008266">
    <property type="entry name" value="Tyr_kinase_AS"/>
</dbReference>
<dbReference type="PANTHER" id="PTHR24345">
    <property type="entry name" value="SERINE/THREONINE-PROTEIN KINASE PLK"/>
    <property type="match status" value="1"/>
</dbReference>
<dbReference type="PANTHER" id="PTHR24345:SF91">
    <property type="entry name" value="SERINE_THREONINE-PROTEIN KINASE PLK4"/>
    <property type="match status" value="1"/>
</dbReference>
<dbReference type="Pfam" id="PF00069">
    <property type="entry name" value="Pkinase"/>
    <property type="match status" value="1"/>
</dbReference>
<dbReference type="Pfam" id="PF18190">
    <property type="entry name" value="Plk4_PB1"/>
    <property type="match status" value="1"/>
</dbReference>
<dbReference type="Pfam" id="PF18409">
    <property type="entry name" value="Plk4_PB2"/>
    <property type="match status" value="1"/>
</dbReference>
<dbReference type="SUPFAM" id="SSF82615">
    <property type="entry name" value="Polo-box domain"/>
    <property type="match status" value="1"/>
</dbReference>
<dbReference type="SUPFAM" id="SSF56112">
    <property type="entry name" value="Protein kinase-like (PK-like)"/>
    <property type="match status" value="1"/>
</dbReference>
<dbReference type="PROSITE" id="PS51984">
    <property type="entry name" value="CPB1"/>
    <property type="match status" value="1"/>
</dbReference>
<dbReference type="PROSITE" id="PS51985">
    <property type="entry name" value="CPB2"/>
    <property type="match status" value="1"/>
</dbReference>
<dbReference type="PROSITE" id="PS50078">
    <property type="entry name" value="POLO_BOX"/>
    <property type="match status" value="1"/>
</dbReference>
<dbReference type="PROSITE" id="PS00107">
    <property type="entry name" value="PROTEIN_KINASE_ATP"/>
    <property type="match status" value="1"/>
</dbReference>
<dbReference type="PROSITE" id="PS50011">
    <property type="entry name" value="PROTEIN_KINASE_DOM"/>
    <property type="match status" value="1"/>
</dbReference>
<feature type="chain" id="PRO_0000385299" description="Serine/threonine-protein kinase PLK4">
    <location>
        <begin position="1"/>
        <end position="766"/>
    </location>
</feature>
<feature type="domain" description="Protein kinase" evidence="3">
    <location>
        <begin position="14"/>
        <end position="267"/>
    </location>
</feature>
<feature type="domain" description="Cryptic POLO box 1 (CPB1)" evidence="4">
    <location>
        <begin position="379"/>
        <end position="496"/>
    </location>
</feature>
<feature type="domain" description="Cryptic POLO box 2 (CPB2)" evidence="5">
    <location>
        <begin position="497"/>
        <end position="600"/>
    </location>
</feature>
<feature type="domain" description="POLO box" evidence="2">
    <location>
        <begin position="658"/>
        <end position="737"/>
    </location>
</feature>
<feature type="active site" description="Proton acceptor" evidence="3">
    <location>
        <position position="138"/>
    </location>
</feature>
<feature type="binding site" evidence="3">
    <location>
        <begin position="20"/>
        <end position="28"/>
    </location>
    <ligand>
        <name>ATP</name>
        <dbReference type="ChEBI" id="CHEBI:30616"/>
    </ligand>
</feature>
<feature type="binding site" evidence="3">
    <location>
        <position position="43"/>
    </location>
    <ligand>
        <name>ATP</name>
        <dbReference type="ChEBI" id="CHEBI:30616"/>
    </ligand>
</feature>
<reference key="1">
    <citation type="journal article" date="2007" name="Nature">
        <title>Evolution of genes and genomes on the Drosophila phylogeny.</title>
        <authorList>
            <consortium name="Drosophila 12 genomes consortium"/>
        </authorList>
    </citation>
    <scope>NUCLEOTIDE SEQUENCE [LARGE SCALE GENOMIC DNA]</scope>
    <source>
        <strain>Tai18E2 / Tucson 14021-0261.01</strain>
    </source>
</reference>